<feature type="signal peptide" evidence="1">
    <location>
        <begin position="1"/>
        <end position="21"/>
    </location>
</feature>
<feature type="chain" id="PRO_5000132641" description="LPS-assembly protein LptD">
    <location>
        <begin position="22"/>
        <end position="757"/>
    </location>
</feature>
<dbReference type="EMBL" id="CP000453">
    <property type="protein sequence ID" value="ABI55554.1"/>
    <property type="molecule type" value="Genomic_DNA"/>
</dbReference>
<dbReference type="RefSeq" id="WP_011627950.1">
    <property type="nucleotide sequence ID" value="NC_008340.1"/>
</dbReference>
<dbReference type="SMR" id="Q0AC83"/>
<dbReference type="KEGG" id="aeh:Mlg_0199"/>
<dbReference type="eggNOG" id="COG1452">
    <property type="taxonomic scope" value="Bacteria"/>
</dbReference>
<dbReference type="HOGENOM" id="CLU_009039_0_0_6"/>
<dbReference type="OrthoDB" id="9760225at2"/>
<dbReference type="Proteomes" id="UP000001962">
    <property type="component" value="Chromosome"/>
</dbReference>
<dbReference type="GO" id="GO:0009279">
    <property type="term" value="C:cell outer membrane"/>
    <property type="evidence" value="ECO:0007669"/>
    <property type="project" value="UniProtKB-SubCell"/>
</dbReference>
<dbReference type="GO" id="GO:1990351">
    <property type="term" value="C:transporter complex"/>
    <property type="evidence" value="ECO:0007669"/>
    <property type="project" value="TreeGrafter"/>
</dbReference>
<dbReference type="GO" id="GO:0043165">
    <property type="term" value="P:Gram-negative-bacterium-type cell outer membrane assembly"/>
    <property type="evidence" value="ECO:0007669"/>
    <property type="project" value="UniProtKB-UniRule"/>
</dbReference>
<dbReference type="GO" id="GO:0015920">
    <property type="term" value="P:lipopolysaccharide transport"/>
    <property type="evidence" value="ECO:0007669"/>
    <property type="project" value="InterPro"/>
</dbReference>
<dbReference type="HAMAP" id="MF_01411">
    <property type="entry name" value="LPS_assembly_LptD"/>
    <property type="match status" value="1"/>
</dbReference>
<dbReference type="InterPro" id="IPR020889">
    <property type="entry name" value="LipoPS_assembly_LptD"/>
</dbReference>
<dbReference type="InterPro" id="IPR050218">
    <property type="entry name" value="LptD"/>
</dbReference>
<dbReference type="InterPro" id="IPR007543">
    <property type="entry name" value="LptD_C"/>
</dbReference>
<dbReference type="PANTHER" id="PTHR30189">
    <property type="entry name" value="LPS-ASSEMBLY PROTEIN"/>
    <property type="match status" value="1"/>
</dbReference>
<dbReference type="PANTHER" id="PTHR30189:SF1">
    <property type="entry name" value="LPS-ASSEMBLY PROTEIN LPTD"/>
    <property type="match status" value="1"/>
</dbReference>
<dbReference type="Pfam" id="PF04453">
    <property type="entry name" value="LptD"/>
    <property type="match status" value="1"/>
</dbReference>
<sequence>MRRLIPIAITGSLLWGAAVQAQGPTAAEREAYFAERQRALCGPPLVMPLDAVDTALRHRPETPATVDADAIYYDGAAGRYRFRGDVLMQRLDQRLRSEEVRYDHASGRVDLPFPFVYEEAGLALTGESGWLQLREDRGEVVAGEFMLDERNIRGRAERLELADAQRSRYEDVGYTTCRPGNEDWWLQARELELDREEGLGTARHAWFTFLNVPLFYTPWITFPIDDRRRTGLLAPGFATSDRHGTDITVPVYWNIAPNYDATLVPRWIERRGALLGGEFRYLQEAFSGELYGEYLPNDSLARDDRWLLGIDHRGRLPRGWRYDADINRASDGDYLRDFGSGLLETSSSHLQSRGRLRNRWNDWAVAAEVQHWQTLDDDLRNPYRREPRLTADYQGPFRAGQPRYRLNTEYTRFALPDTDADRPEGERMDIAPRVEWRLHRPWGYLTPAAALRHTQYRLDDPVPGADDRSPRRTVPTFSVDSGLFFDRPFDWDGRPMVQTLEPRVFYVYTPERRQDDLPVFDTSRRDFFFDGLFREDRFSGADRVGDADQVTVALTTRFVDLGGGREWLRASLGQIHYRRDRQVTLFPETDRAADRRSRSDYMAEMRSELPGGVLAQGEYRYNPYDSRSEQGAFRLGWHPRPDLLVGAGYRMRYGDEGRDVEQSDLAAVIPLGPRFSLIGRWLYSLADDNSLETVGGLEYRTCCWRVRAMGRRSFEGAGAEPDTSIMLQFEFTGLGQVDSGSTDFLQDSIYGYEGDRF</sequence>
<protein>
    <recommendedName>
        <fullName evidence="1">LPS-assembly protein LptD</fullName>
    </recommendedName>
</protein>
<organism>
    <name type="scientific">Alkalilimnicola ehrlichii (strain ATCC BAA-1101 / DSM 17681 / MLHE-1)</name>
    <dbReference type="NCBI Taxonomy" id="187272"/>
    <lineage>
        <taxon>Bacteria</taxon>
        <taxon>Pseudomonadati</taxon>
        <taxon>Pseudomonadota</taxon>
        <taxon>Gammaproteobacteria</taxon>
        <taxon>Chromatiales</taxon>
        <taxon>Ectothiorhodospiraceae</taxon>
        <taxon>Alkalilimnicola</taxon>
    </lineage>
</organism>
<proteinExistence type="inferred from homology"/>
<comment type="function">
    <text evidence="1">Together with LptE, is involved in the assembly of lipopolysaccharide (LPS) at the surface of the outer membrane.</text>
</comment>
<comment type="subunit">
    <text evidence="1">Component of the lipopolysaccharide transport and assembly complex. Interacts with LptE and LptA.</text>
</comment>
<comment type="subcellular location">
    <subcellularLocation>
        <location evidence="1">Cell outer membrane</location>
    </subcellularLocation>
</comment>
<comment type="similarity">
    <text evidence="1">Belongs to the LptD family.</text>
</comment>
<reference key="1">
    <citation type="submission" date="2006-08" db="EMBL/GenBank/DDBJ databases">
        <title>Complete sequence of Alkalilimnicola ehrilichei MLHE-1.</title>
        <authorList>
            <person name="Copeland A."/>
            <person name="Lucas S."/>
            <person name="Lapidus A."/>
            <person name="Barry K."/>
            <person name="Detter J.C."/>
            <person name="Glavina del Rio T."/>
            <person name="Hammon N."/>
            <person name="Israni S."/>
            <person name="Dalin E."/>
            <person name="Tice H."/>
            <person name="Pitluck S."/>
            <person name="Sims D."/>
            <person name="Brettin T."/>
            <person name="Bruce D."/>
            <person name="Han C."/>
            <person name="Tapia R."/>
            <person name="Gilna P."/>
            <person name="Schmutz J."/>
            <person name="Larimer F."/>
            <person name="Land M."/>
            <person name="Hauser L."/>
            <person name="Kyrpides N."/>
            <person name="Mikhailova N."/>
            <person name="Oremland R.S."/>
            <person name="Hoeft S.E."/>
            <person name="Switzer-Blum J."/>
            <person name="Kulp T."/>
            <person name="King G."/>
            <person name="Tabita R."/>
            <person name="Witte B."/>
            <person name="Santini J.M."/>
            <person name="Basu P."/>
            <person name="Hollibaugh J.T."/>
            <person name="Xie G."/>
            <person name="Stolz J.F."/>
            <person name="Richardson P."/>
        </authorList>
    </citation>
    <scope>NUCLEOTIDE SEQUENCE [LARGE SCALE GENOMIC DNA]</scope>
    <source>
        <strain>ATCC BAA-1101 / DSM 17681 / MLHE-1</strain>
    </source>
</reference>
<accession>Q0AC83</accession>
<gene>
    <name evidence="1" type="primary">lptD</name>
    <name type="synonym">imp</name>
    <name type="synonym">ostA</name>
    <name type="ordered locus">Mlg_0199</name>
</gene>
<evidence type="ECO:0000255" key="1">
    <source>
        <dbReference type="HAMAP-Rule" id="MF_01411"/>
    </source>
</evidence>
<name>LPTD_ALKEH</name>
<keyword id="KW-0998">Cell outer membrane</keyword>
<keyword id="KW-0472">Membrane</keyword>
<keyword id="KW-1185">Reference proteome</keyword>
<keyword id="KW-0732">Signal</keyword>